<accession>A0RHI8</accession>
<sequence length="156" mass="17696">MDKKVTEVVEAFAQPIVEELNLELVDVEYVKEGQDWFLRVFIDSEKGVDIEECGAVSERLSEALDKEDPIPHLYFLDVSSPGAERPLKKEKDFQQAVGKQVAIKTYEPIDGEKMFEGKMLSYDGTTITLLLTIKTRKKEIQIPMDKVANARLAVTF</sequence>
<comment type="function">
    <text evidence="1">Required for maturation of 30S ribosomal subunits.</text>
</comment>
<comment type="subcellular location">
    <subcellularLocation>
        <location evidence="1">Cytoplasm</location>
    </subcellularLocation>
</comment>
<comment type="similarity">
    <text evidence="1">Belongs to the RimP family.</text>
</comment>
<comment type="sequence caution" evidence="2">
    <conflict type="erroneous initiation">
        <sequence resource="EMBL-CDS" id="ABK86681"/>
    </conflict>
</comment>
<gene>
    <name evidence="1" type="primary">rimP</name>
    <name type="ordered locus">BALH_3445</name>
</gene>
<name>RIMP_BACAH</name>
<reference key="1">
    <citation type="journal article" date="2007" name="J. Bacteriol.">
        <title>The complete genome sequence of Bacillus thuringiensis Al Hakam.</title>
        <authorList>
            <person name="Challacombe J.F."/>
            <person name="Altherr M.R."/>
            <person name="Xie G."/>
            <person name="Bhotika S.S."/>
            <person name="Brown N."/>
            <person name="Bruce D."/>
            <person name="Campbell C.S."/>
            <person name="Campbell M.L."/>
            <person name="Chen J."/>
            <person name="Chertkov O."/>
            <person name="Cleland C."/>
            <person name="Dimitrijevic M."/>
            <person name="Doggett N.A."/>
            <person name="Fawcett J.J."/>
            <person name="Glavina T."/>
            <person name="Goodwin L.A."/>
            <person name="Green L.D."/>
            <person name="Han C.S."/>
            <person name="Hill K.K."/>
            <person name="Hitchcock P."/>
            <person name="Jackson P.J."/>
            <person name="Keim P."/>
            <person name="Kewalramani A.R."/>
            <person name="Longmire J."/>
            <person name="Lucas S."/>
            <person name="Malfatti S."/>
            <person name="Martinez D."/>
            <person name="McMurry K."/>
            <person name="Meincke L.J."/>
            <person name="Misra M."/>
            <person name="Moseman B.L."/>
            <person name="Mundt M."/>
            <person name="Munk A.C."/>
            <person name="Okinaka R.T."/>
            <person name="Parson-Quintana B."/>
            <person name="Reilly L.P."/>
            <person name="Richardson P."/>
            <person name="Robinson D.L."/>
            <person name="Saunders E."/>
            <person name="Tapia R."/>
            <person name="Tesmer J.G."/>
            <person name="Thayer N."/>
            <person name="Thompson L.S."/>
            <person name="Tice H."/>
            <person name="Ticknor L.O."/>
            <person name="Wills P.L."/>
            <person name="Gilna P."/>
            <person name="Brettin T.S."/>
        </authorList>
    </citation>
    <scope>NUCLEOTIDE SEQUENCE [LARGE SCALE GENOMIC DNA]</scope>
    <source>
        <strain>Al Hakam</strain>
    </source>
</reference>
<proteinExistence type="inferred from homology"/>
<organism>
    <name type="scientific">Bacillus thuringiensis (strain Al Hakam)</name>
    <dbReference type="NCBI Taxonomy" id="412694"/>
    <lineage>
        <taxon>Bacteria</taxon>
        <taxon>Bacillati</taxon>
        <taxon>Bacillota</taxon>
        <taxon>Bacilli</taxon>
        <taxon>Bacillales</taxon>
        <taxon>Bacillaceae</taxon>
        <taxon>Bacillus</taxon>
        <taxon>Bacillus cereus group</taxon>
    </lineage>
</organism>
<keyword id="KW-0963">Cytoplasm</keyword>
<keyword id="KW-0690">Ribosome biogenesis</keyword>
<evidence type="ECO:0000255" key="1">
    <source>
        <dbReference type="HAMAP-Rule" id="MF_01077"/>
    </source>
</evidence>
<evidence type="ECO:0000305" key="2"/>
<protein>
    <recommendedName>
        <fullName evidence="1">Ribosome maturation factor RimP</fullName>
    </recommendedName>
</protein>
<feature type="chain" id="PRO_0000384610" description="Ribosome maturation factor RimP">
    <location>
        <begin position="1"/>
        <end position="156"/>
    </location>
</feature>
<dbReference type="EMBL" id="CP000485">
    <property type="protein sequence ID" value="ABK86681.1"/>
    <property type="status" value="ALT_INIT"/>
    <property type="molecule type" value="Genomic_DNA"/>
</dbReference>
<dbReference type="RefSeq" id="WP_000359097.1">
    <property type="nucleotide sequence ID" value="NC_008600.1"/>
</dbReference>
<dbReference type="SMR" id="A0RHI8"/>
<dbReference type="GeneID" id="93007295"/>
<dbReference type="KEGG" id="btl:BALH_3445"/>
<dbReference type="HOGENOM" id="CLU_070525_2_0_9"/>
<dbReference type="GO" id="GO:0005829">
    <property type="term" value="C:cytosol"/>
    <property type="evidence" value="ECO:0007669"/>
    <property type="project" value="TreeGrafter"/>
</dbReference>
<dbReference type="GO" id="GO:0000028">
    <property type="term" value="P:ribosomal small subunit assembly"/>
    <property type="evidence" value="ECO:0007669"/>
    <property type="project" value="TreeGrafter"/>
</dbReference>
<dbReference type="GO" id="GO:0006412">
    <property type="term" value="P:translation"/>
    <property type="evidence" value="ECO:0007669"/>
    <property type="project" value="TreeGrafter"/>
</dbReference>
<dbReference type="CDD" id="cd01734">
    <property type="entry name" value="YlxS_C"/>
    <property type="match status" value="1"/>
</dbReference>
<dbReference type="FunFam" id="2.30.30.180:FF:000002">
    <property type="entry name" value="Ribosome maturation factor RimP"/>
    <property type="match status" value="1"/>
</dbReference>
<dbReference type="FunFam" id="3.30.300.70:FF:000001">
    <property type="entry name" value="Ribosome maturation factor RimP"/>
    <property type="match status" value="1"/>
</dbReference>
<dbReference type="Gene3D" id="2.30.30.180">
    <property type="entry name" value="Ribosome maturation factor RimP, C-terminal domain"/>
    <property type="match status" value="1"/>
</dbReference>
<dbReference type="Gene3D" id="3.30.300.70">
    <property type="entry name" value="RimP-like superfamily, N-terminal"/>
    <property type="match status" value="1"/>
</dbReference>
<dbReference type="HAMAP" id="MF_01077">
    <property type="entry name" value="RimP"/>
    <property type="match status" value="1"/>
</dbReference>
<dbReference type="InterPro" id="IPR003728">
    <property type="entry name" value="Ribosome_maturation_RimP"/>
</dbReference>
<dbReference type="InterPro" id="IPR028998">
    <property type="entry name" value="RimP_C"/>
</dbReference>
<dbReference type="InterPro" id="IPR036847">
    <property type="entry name" value="RimP_C_sf"/>
</dbReference>
<dbReference type="InterPro" id="IPR028989">
    <property type="entry name" value="RimP_N"/>
</dbReference>
<dbReference type="InterPro" id="IPR035956">
    <property type="entry name" value="RimP_N_sf"/>
</dbReference>
<dbReference type="NCBIfam" id="NF000928">
    <property type="entry name" value="PRK00092.1-2"/>
    <property type="match status" value="1"/>
</dbReference>
<dbReference type="PANTHER" id="PTHR33867">
    <property type="entry name" value="RIBOSOME MATURATION FACTOR RIMP"/>
    <property type="match status" value="1"/>
</dbReference>
<dbReference type="PANTHER" id="PTHR33867:SF1">
    <property type="entry name" value="RIBOSOME MATURATION FACTOR RIMP"/>
    <property type="match status" value="1"/>
</dbReference>
<dbReference type="Pfam" id="PF17384">
    <property type="entry name" value="DUF150_C"/>
    <property type="match status" value="1"/>
</dbReference>
<dbReference type="Pfam" id="PF02576">
    <property type="entry name" value="RimP_N"/>
    <property type="match status" value="1"/>
</dbReference>
<dbReference type="SUPFAM" id="SSF74942">
    <property type="entry name" value="YhbC-like, C-terminal domain"/>
    <property type="match status" value="1"/>
</dbReference>
<dbReference type="SUPFAM" id="SSF75420">
    <property type="entry name" value="YhbC-like, N-terminal domain"/>
    <property type="match status" value="1"/>
</dbReference>